<proteinExistence type="evidence at protein level"/>
<comment type="function">
    <text evidence="1 2 3 4 5 6 7 8 9 12 13">Verruculogen synthase; part of the gene cluster that mediates the biosynthesis of fumitremorgins, indole alkaloids that carry not only intriguing chemical structures, but also interesting biological and pharmacological activities (PubMed:19763315, PubMed:23649274, PubMed:31117657). The biosynthesis of fumitremorgin-type alkaloids begins by condensation of the two amino acids L-tryptophan and L-proline to brevianamide F, catalyzed by the non-ribosomal peptide synthetase ftmA (PubMed:16755625). Brevianamide F is then prenylated by the prenyltransferase ftmPT1/ftmB in the presence of dimethylallyl diphosphate, resulting in the formation of tryprostatin B (PubMed:16000710, PubMed:21105662, PubMed:23090579). The three cytochrome P450 monooxygenases, ftmP450-1/ftmC, ftmP450-2/ftmE and ftmP450-3/FtmG, are responsible for the conversion of tryprostatin B to 6-hydroxytryprostatin B, tryprostatin A to fumitremorgin C and fumitremorgin C to 12,13-dihydroxyfumitremorgin C, respectively (PubMed:19226505). The putative methyltransferase ftmMT/ftmD is expected for the conversion of 6-hydroxytryprostatin B to tryprostatin A (Probable). FtmPT2/FtmH catalyzes the prenylation of 12,13-dihydroxyfumitre-morgin C in the presence of dimethylallyl diphosphate, resulting in the formation of fumitremorgin B (PubMed:18683158). Fumitremorgin B is further converted to verruculogen by ftmOx1/ftmF via the insertion of an endoperoxide bond between the two prenyl moieties (PubMed:19763315, PubMed:31117657). In some fungal species, verruculogen is further converted to fumitremorgin A, but the enzymes involved in this step have not been identified yet (Probable).</text>
</comment>
<comment type="catalytic activity">
    <reaction evidence="5 9">
        <text>fumitremorgin B + 2-oxoglutarate + AH2 + 2 O2 = verruculogen + succinate + A + CO2 + H2O</text>
        <dbReference type="Rhea" id="RHEA:35975"/>
        <dbReference type="ChEBI" id="CHEBI:13193"/>
        <dbReference type="ChEBI" id="CHEBI:15377"/>
        <dbReference type="ChEBI" id="CHEBI:15379"/>
        <dbReference type="ChEBI" id="CHEBI:16526"/>
        <dbReference type="ChEBI" id="CHEBI:16810"/>
        <dbReference type="ChEBI" id="CHEBI:17499"/>
        <dbReference type="ChEBI" id="CHEBI:30031"/>
        <dbReference type="ChEBI" id="CHEBI:64531"/>
        <dbReference type="ChEBI" id="CHEBI:72765"/>
        <dbReference type="EC" id="1.14.11.38"/>
    </reaction>
</comment>
<comment type="cofactor">
    <cofactor evidence="5">
        <name>Fe cation</name>
        <dbReference type="ChEBI" id="CHEBI:24875"/>
    </cofactor>
</comment>
<comment type="pathway">
    <text evidence="5 8 9">Mycotoxin biosynthesis.</text>
</comment>
<comment type="subunit">
    <text evidence="5">Homodimer.</text>
</comment>
<comment type="interaction">
    <interactant intactId="EBI-16183015">
        <id>Q4WAW9</id>
    </interactant>
    <interactant intactId="EBI-16183015">
        <id>Q4WAW9</id>
        <label>ftmOx1</label>
    </interactant>
    <organismsDiffer>false</organismsDiffer>
    <experiments>3</experiments>
</comment>
<comment type="similarity">
    <text evidence="12">Belongs to the PhyH family.</text>
</comment>
<comment type="caution">
    <text evidence="14">Despite the presence of this enzyme, this enzyme may not be involved in verruculogen synthesis in vivo. In contrast to other A.fumigatus strains, strain ATCC MYA-4609 does not produce indole alkaloids such as fumitremorgins and verruculogen. While the biosynthetic pathway is complete, a variation in the O-methyltransferase FtmD (AC Q4WAW6) abolishes production of the tryprostatin A intermediate (PubMed:23649274).</text>
</comment>
<gene>
    <name evidence="10" type="primary">ftmOx1</name>
    <name evidence="11" type="synonym">ftmF</name>
    <name type="ORF">AFUA_8G00230</name>
</gene>
<name>FTMF_ASPFU</name>
<evidence type="ECO:0000269" key="1">
    <source>
    </source>
</evidence>
<evidence type="ECO:0000269" key="2">
    <source>
    </source>
</evidence>
<evidence type="ECO:0000269" key="3">
    <source>
    </source>
</evidence>
<evidence type="ECO:0000269" key="4">
    <source>
    </source>
</evidence>
<evidence type="ECO:0000269" key="5">
    <source>
    </source>
</evidence>
<evidence type="ECO:0000269" key="6">
    <source>
    </source>
</evidence>
<evidence type="ECO:0000269" key="7">
    <source>
    </source>
</evidence>
<evidence type="ECO:0000269" key="8">
    <source>
    </source>
</evidence>
<evidence type="ECO:0000269" key="9">
    <source>
    </source>
</evidence>
<evidence type="ECO:0000303" key="10">
    <source>
    </source>
</evidence>
<evidence type="ECO:0000303" key="11">
    <source>
    </source>
</evidence>
<evidence type="ECO:0000305" key="12"/>
<evidence type="ECO:0000305" key="13">
    <source>
    </source>
</evidence>
<evidence type="ECO:0000305" key="14">
    <source>
    </source>
</evidence>
<evidence type="ECO:0007744" key="15">
    <source>
        <dbReference type="PDB" id="6OXH"/>
    </source>
</evidence>
<evidence type="ECO:0007744" key="16">
    <source>
        <dbReference type="PDB" id="6OXJ"/>
    </source>
</evidence>
<evidence type="ECO:0007829" key="17">
    <source>
        <dbReference type="PDB" id="4Y5T"/>
    </source>
</evidence>
<evidence type="ECO:0007829" key="18">
    <source>
        <dbReference type="PDB" id="6OXJ"/>
    </source>
</evidence>
<evidence type="ECO:0007829" key="19">
    <source>
        <dbReference type="PDB" id="7ETK"/>
    </source>
</evidence>
<protein>
    <recommendedName>
        <fullName evidence="10">Verruculogen synthase</fullName>
        <ecNumber evidence="5 9">1.14.11.38</ecNumber>
    </recommendedName>
    <alternativeName>
        <fullName evidence="11">Fumitremorgin biosynthesis protein F</fullName>
    </alternativeName>
</protein>
<accession>Q4WAW9</accession>
<dbReference type="EC" id="1.14.11.38" evidence="5 9"/>
<dbReference type="EMBL" id="AAHF01000014">
    <property type="protein sequence ID" value="EAL85143.1"/>
    <property type="molecule type" value="Genomic_DNA"/>
</dbReference>
<dbReference type="RefSeq" id="XP_747181.1">
    <property type="nucleotide sequence ID" value="XM_742088.1"/>
</dbReference>
<dbReference type="PDB" id="4Y5S">
    <property type="method" value="X-ray"/>
    <property type="resolution" value="2.54 A"/>
    <property type="chains" value="A/B=2-291"/>
</dbReference>
<dbReference type="PDB" id="4Y5T">
    <property type="method" value="X-ray"/>
    <property type="resolution" value="1.95 A"/>
    <property type="chains" value="A/B=2-291"/>
</dbReference>
<dbReference type="PDB" id="6OXH">
    <property type="method" value="X-ray"/>
    <property type="resolution" value="1.92 A"/>
    <property type="chains" value="A/B=1-291"/>
</dbReference>
<dbReference type="PDB" id="6OXJ">
    <property type="method" value="X-ray"/>
    <property type="resolution" value="1.55 A"/>
    <property type="chains" value="A/B=1-291"/>
</dbReference>
<dbReference type="PDB" id="7DE0">
    <property type="method" value="X-ray"/>
    <property type="resolution" value="2.40 A"/>
    <property type="chains" value="A/B/C/D=1-291"/>
</dbReference>
<dbReference type="PDB" id="7ETK">
    <property type="method" value="X-ray"/>
    <property type="resolution" value="1.22 A"/>
    <property type="chains" value="A/B=1-291"/>
</dbReference>
<dbReference type="PDB" id="7ETL">
    <property type="method" value="X-ray"/>
    <property type="resolution" value="1.99 A"/>
    <property type="chains" value="A/B=1-291"/>
</dbReference>
<dbReference type="PDB" id="7WSB">
    <property type="method" value="X-ray"/>
    <property type="resolution" value="2.87 A"/>
    <property type="chains" value="A/B/C/D/E/F=2-291"/>
</dbReference>
<dbReference type="PDBsum" id="4Y5S"/>
<dbReference type="PDBsum" id="4Y5T"/>
<dbReference type="PDBsum" id="6OXH"/>
<dbReference type="PDBsum" id="6OXJ"/>
<dbReference type="PDBsum" id="7DE0"/>
<dbReference type="PDBsum" id="7ETK"/>
<dbReference type="PDBsum" id="7ETL"/>
<dbReference type="PDBsum" id="7WSB"/>
<dbReference type="SMR" id="Q4WAW9"/>
<dbReference type="DIP" id="DIP-61797N"/>
<dbReference type="FunCoup" id="Q4WAW9">
    <property type="interactions" value="13"/>
</dbReference>
<dbReference type="STRING" id="330879.Q4WAW9"/>
<dbReference type="EnsemblFungi" id="EAL85143">
    <property type="protein sequence ID" value="EAL85143"/>
    <property type="gene ID" value="AFUA_8G00230"/>
</dbReference>
<dbReference type="GeneID" id="3504528"/>
<dbReference type="KEGG" id="afm:AFUA_8G00230"/>
<dbReference type="VEuPathDB" id="FungiDB:Afu8g00230"/>
<dbReference type="eggNOG" id="ENOG502S7ZW">
    <property type="taxonomic scope" value="Eukaryota"/>
</dbReference>
<dbReference type="HOGENOM" id="CLU_047725_1_0_1"/>
<dbReference type="InParanoid" id="Q4WAW9"/>
<dbReference type="OMA" id="ADKYPPH"/>
<dbReference type="OrthoDB" id="445007at2759"/>
<dbReference type="BioCyc" id="MetaCyc:MONOMER-18769"/>
<dbReference type="EvolutionaryTrace" id="Q4WAW9"/>
<dbReference type="Proteomes" id="UP000002530">
    <property type="component" value="Chromosome 8"/>
</dbReference>
<dbReference type="GO" id="GO:0051213">
    <property type="term" value="F:dioxygenase activity"/>
    <property type="evidence" value="ECO:0000314"/>
    <property type="project" value="AspGD"/>
</dbReference>
<dbReference type="GO" id="GO:1902181">
    <property type="term" value="P:verruculogen biosynthetic process"/>
    <property type="evidence" value="ECO:0000314"/>
    <property type="project" value="AspGD"/>
</dbReference>
<dbReference type="FunFam" id="2.60.120.620:FF:000048">
    <property type="entry name" value="Verruculogen synthase"/>
    <property type="match status" value="1"/>
</dbReference>
<dbReference type="Gene3D" id="2.60.120.620">
    <property type="entry name" value="q2cbj1_9rhob like domain"/>
    <property type="match status" value="1"/>
</dbReference>
<dbReference type="InterPro" id="IPR008775">
    <property type="entry name" value="Phytyl_CoA_dOase-like"/>
</dbReference>
<dbReference type="PANTHER" id="PTHR20883:SF41">
    <property type="entry name" value="IRON_ALPHA-KETOGLUTARATE-DEPENDENT DIOXYGENASE ASQJ"/>
    <property type="match status" value="1"/>
</dbReference>
<dbReference type="PANTHER" id="PTHR20883">
    <property type="entry name" value="PHYTANOYL-COA DIOXYGENASE DOMAIN CONTAINING 1"/>
    <property type="match status" value="1"/>
</dbReference>
<dbReference type="Pfam" id="PF05721">
    <property type="entry name" value="PhyH"/>
    <property type="match status" value="1"/>
</dbReference>
<dbReference type="SUPFAM" id="SSF51197">
    <property type="entry name" value="Clavaminate synthase-like"/>
    <property type="match status" value="1"/>
</dbReference>
<reference key="1">
    <citation type="journal article" date="2005" name="Nature">
        <title>Genomic sequence of the pathogenic and allergenic filamentous fungus Aspergillus fumigatus.</title>
        <authorList>
            <person name="Nierman W.C."/>
            <person name="Pain A."/>
            <person name="Anderson M.J."/>
            <person name="Wortman J.R."/>
            <person name="Kim H.S."/>
            <person name="Arroyo J."/>
            <person name="Berriman M."/>
            <person name="Abe K."/>
            <person name="Archer D.B."/>
            <person name="Bermejo C."/>
            <person name="Bennett J.W."/>
            <person name="Bowyer P."/>
            <person name="Chen D."/>
            <person name="Collins M."/>
            <person name="Coulsen R."/>
            <person name="Davies R."/>
            <person name="Dyer P.S."/>
            <person name="Farman M.L."/>
            <person name="Fedorova N."/>
            <person name="Fedorova N.D."/>
            <person name="Feldblyum T.V."/>
            <person name="Fischer R."/>
            <person name="Fosker N."/>
            <person name="Fraser A."/>
            <person name="Garcia J.L."/>
            <person name="Garcia M.J."/>
            <person name="Goble A."/>
            <person name="Goldman G.H."/>
            <person name="Gomi K."/>
            <person name="Griffith-Jones S."/>
            <person name="Gwilliam R."/>
            <person name="Haas B.J."/>
            <person name="Haas H."/>
            <person name="Harris D.E."/>
            <person name="Horiuchi H."/>
            <person name="Huang J."/>
            <person name="Humphray S."/>
            <person name="Jimenez J."/>
            <person name="Keller N."/>
            <person name="Khouri H."/>
            <person name="Kitamoto K."/>
            <person name="Kobayashi T."/>
            <person name="Konzack S."/>
            <person name="Kulkarni R."/>
            <person name="Kumagai T."/>
            <person name="Lafton A."/>
            <person name="Latge J.-P."/>
            <person name="Li W."/>
            <person name="Lord A."/>
            <person name="Lu C."/>
            <person name="Majoros W.H."/>
            <person name="May G.S."/>
            <person name="Miller B.L."/>
            <person name="Mohamoud Y."/>
            <person name="Molina M."/>
            <person name="Monod M."/>
            <person name="Mouyna I."/>
            <person name="Mulligan S."/>
            <person name="Murphy L.D."/>
            <person name="O'Neil S."/>
            <person name="Paulsen I."/>
            <person name="Penalva M.A."/>
            <person name="Pertea M."/>
            <person name="Price C."/>
            <person name="Pritchard B.L."/>
            <person name="Quail M.A."/>
            <person name="Rabbinowitsch E."/>
            <person name="Rawlins N."/>
            <person name="Rajandream M.A."/>
            <person name="Reichard U."/>
            <person name="Renauld H."/>
            <person name="Robson G.D."/>
            <person name="Rodriguez de Cordoba S."/>
            <person name="Rodriguez-Pena J.M."/>
            <person name="Ronning C.M."/>
            <person name="Rutter S."/>
            <person name="Salzberg S.L."/>
            <person name="Sanchez M."/>
            <person name="Sanchez-Ferrero J.C."/>
            <person name="Saunders D."/>
            <person name="Seeger K."/>
            <person name="Squares R."/>
            <person name="Squares S."/>
            <person name="Takeuchi M."/>
            <person name="Tekaia F."/>
            <person name="Turner G."/>
            <person name="Vazquez de Aldana C.R."/>
            <person name="Weidman J."/>
            <person name="White O."/>
            <person name="Woodward J.R."/>
            <person name="Yu J.-H."/>
            <person name="Fraser C.M."/>
            <person name="Galagan J.E."/>
            <person name="Asai K."/>
            <person name="Machida M."/>
            <person name="Hall N."/>
            <person name="Barrell B.G."/>
            <person name="Denning D.W."/>
        </authorList>
    </citation>
    <scope>NUCLEOTIDE SEQUENCE [LARGE SCALE GENOMIC DNA]</scope>
    <source>
        <strain>ATCC MYA-4609 / CBS 101355 / FGSC A1100 / Af293</strain>
    </source>
</reference>
<reference key="2">
    <citation type="journal article" date="2005" name="Microbiology">
        <title>Overproduction, purification and characterization of FtmPT1, a brevianamide F prenyltransferase from Aspergillus fumigatus.</title>
        <authorList>
            <person name="Grundmann A."/>
            <person name="Li S.M."/>
        </authorList>
    </citation>
    <scope>FUNCTION</scope>
</reference>
<reference key="3">
    <citation type="journal article" date="2006" name="ChemBioChem">
        <title>The fumitremorgin gene cluster of Aspergillus fumigatus: identification of a gene encoding brevianamide F synthetase.</title>
        <authorList>
            <person name="Maiya S."/>
            <person name="Grundmann A."/>
            <person name="Li S.M."/>
            <person name="Turner G."/>
        </authorList>
    </citation>
    <scope>FUNCTION</scope>
</reference>
<reference key="4">
    <citation type="journal article" date="2008" name="ChemBioChem">
        <title>FtmPT2, an N-prenyltransferase from Aspergillus fumigatus, catalyses the last step in the biosynthesis of fumitremorgin B.</title>
        <authorList>
            <person name="Grundmann A."/>
            <person name="Kuznetsova T."/>
            <person name="Afiyatullov S.S."/>
            <person name="Li S.M."/>
        </authorList>
    </citation>
    <scope>FUNCTION</scope>
</reference>
<reference key="5">
    <citation type="journal article" date="2009" name="ChemBioChem">
        <title>Identification of cytochrome P450s required for fumitremorgin biosynthesis in Aspergillus fumigatus.</title>
        <authorList>
            <person name="Kato N."/>
            <person name="Suzuki H."/>
            <person name="Takagi H."/>
            <person name="Asami Y."/>
            <person name="Kakeya H."/>
            <person name="Uramoto M."/>
            <person name="Usui T."/>
            <person name="Takahashi S."/>
            <person name="Sugimoto Y."/>
            <person name="Osada H."/>
        </authorList>
    </citation>
    <scope>FUNCTION</scope>
</reference>
<reference key="6">
    <citation type="journal article" date="2009" name="Org. Biomol. Chem.">
        <title>FtmOx1, a non-heme Fe(II) and alpha-ketoglutarate-dependent dioxygenase, catalyses the endoperoxide formation of verruculogen in Aspergillus fumigatus.</title>
        <authorList>
            <person name="Steffan N."/>
            <person name="Grundmann A."/>
            <person name="Afiyatullov S."/>
            <person name="Ruan H."/>
            <person name="Li S.M."/>
        </authorList>
    </citation>
    <scope>FUNCTION</scope>
    <scope>CATALYTIC ACTIVITY</scope>
    <scope>COFACTOR</scope>
    <scope>SUBUNIT</scope>
    <scope>PATHWAY</scope>
</reference>
<reference key="7">
    <citation type="journal article" date="2010" name="J. Am. Chem. Soc.">
        <title>Structure-function analysis of an enzymatic prenyl transfer reaction identifies a reaction chamber with modifiable specificity.</title>
        <authorList>
            <person name="Jost M."/>
            <person name="Zocher G."/>
            <person name="Tarcz S."/>
            <person name="Matuschek M."/>
            <person name="Xie X."/>
            <person name="Li S.M."/>
            <person name="Stehle T."/>
        </authorList>
    </citation>
    <scope>FUNCTION</scope>
</reference>
<reference key="8">
    <citation type="journal article" date="2012" name="Org. Biomol. Chem.">
        <title>Breaking the regioselectivity of indole prenyltransferases: identification of regular C3-prenylated hexahydropyrrolo[2,3-b]indoles as side products of the regular C2-prenyltransferase FtmPT1.</title>
        <authorList>
            <person name="Wollinsky B."/>
            <person name="Ludwig L."/>
            <person name="Xie X."/>
            <person name="Li S.M."/>
        </authorList>
    </citation>
    <scope>FUNCTION</scope>
</reference>
<reference key="9">
    <citation type="journal article" date="2013" name="Biosci. Biotechnol. Biochem.">
        <title>A point mutation in ftmD blocks the fumitremorgin biosynthetic pathway in Aspergillus fumigatus strain Af293.</title>
        <authorList>
            <person name="Kato N."/>
            <person name="Suzuki H."/>
            <person name="Okumura H."/>
            <person name="Takahashi S."/>
            <person name="Osada H."/>
        </authorList>
    </citation>
    <scope>FUNCTION</scope>
    <scope>PATHWAY</scope>
    <source>
        <strain>ATCC MYA-4609 / CBS 101355 / FGSC A1100 / Af293</strain>
    </source>
</reference>
<reference key="10">
    <citation type="journal article" date="2015" name="Nature">
        <title>Endoperoxide formation by an alpha-ketoglutarate-dependent mononuclear non-haem iron enzyme.</title>
        <authorList>
            <person name="Yan W."/>
            <person name="Song H."/>
            <person name="Song F."/>
            <person name="Guo Y."/>
            <person name="Wu C.H."/>
            <person name="Her A.S."/>
            <person name="Pu Y."/>
            <person name="Wang S."/>
            <person name="Naowarojna N."/>
            <person name="Weitz A."/>
            <person name="Hendrich M.P."/>
            <person name="Costello C.E."/>
            <person name="Zhang L."/>
            <person name="Liu P."/>
            <person name="Zhang Y.J."/>
        </authorList>
    </citation>
    <scope>RETRACTED PAPER</scope>
</reference>
<reference key="11">
    <citation type="journal article" date="2021" name="Nature">
        <title>Retraction Note: Endoperoxide formation by an alpha-ketoglutarate-dependent mononuclear non-haem iron enzyme.</title>
        <authorList>
            <person name="Yan W."/>
            <person name="Song H."/>
            <person name="Song F."/>
            <person name="Guo Y."/>
            <person name="Wu C.H."/>
            <person name="Her A.S."/>
            <person name="Pu Y."/>
            <person name="Wang S."/>
            <person name="Naowarojna N."/>
            <person name="Weitz A."/>
            <person name="Hendrich M.P."/>
            <person name="Costello C.E."/>
            <person name="Zhang L."/>
            <person name="Liu P."/>
            <person name="Zhang Y.J."/>
        </authorList>
    </citation>
    <scope>RETRACTION NOTICE OF PUBMED:26524521</scope>
</reference>
<reference evidence="15 16" key="12">
    <citation type="journal article" date="2019" name="J. Am. Chem. Soc.">
        <title>Hydrogen Donation but not Abstraction by a Tyrosine (Y68) during Endoperoxide Installation by Verruculogen Synthase (FtmOx1).</title>
        <authorList>
            <person name="Dunham N.P."/>
            <person name="Del Rio Pantoja J.M."/>
            <person name="Zhang B."/>
            <person name="Rajakovich L.J."/>
            <person name="Allen B.D."/>
            <person name="Krebs C."/>
            <person name="Boal A.K."/>
            <person name="Bollinger J.M. Jr."/>
        </authorList>
    </citation>
    <scope>X-RAY CRYSTALLOGRAPHY (1.55 ANGSTROMS)</scope>
    <scope>FUNCTION</scope>
    <scope>CATALYTIC ACTIVITY</scope>
    <scope>ACTIVE SITE</scope>
    <scope>MUTAGENESIS OF TYR-68</scope>
    <scope>PATHWAY</scope>
</reference>
<sequence length="291" mass="32667">MTVDSKPQLQRLAADADVDRMCRLLEEDGAFILKGLLPFDVVESFNRELDVQMAIPPPKGERLLADKYPPHFKYVPNVATTCPTFRNTVLINPVIHAICEAYFQRTGDYWLSAAFLREIESGMPAQPFHRDDATHPLMHYQPLEAPPVSLSVIFPLTEFTEENGATEVILGSHRWTEVGTPERDQAVLATMDPGDVLIVRQRVVHAGGGNRTTAGKPRRVVLAYFNSVQLTPFETYRTMPREMVESMTVLGQRMLGWRTMKPSDPNIVGINLIDDKRLENVLQLKAADSPA</sequence>
<keyword id="KW-0002">3D-structure</keyword>
<keyword id="KW-0223">Dioxygenase</keyword>
<keyword id="KW-0408">Iron</keyword>
<keyword id="KW-0560">Oxidoreductase</keyword>
<keyword id="KW-1185">Reference proteome</keyword>
<keyword id="KW-0843">Virulence</keyword>
<organism>
    <name type="scientific">Aspergillus fumigatus (strain ATCC MYA-4609 / CBS 101355 / FGSC A1100 / Af293)</name>
    <name type="common">Neosartorya fumigata</name>
    <dbReference type="NCBI Taxonomy" id="330879"/>
    <lineage>
        <taxon>Eukaryota</taxon>
        <taxon>Fungi</taxon>
        <taxon>Dikarya</taxon>
        <taxon>Ascomycota</taxon>
        <taxon>Pezizomycotina</taxon>
        <taxon>Eurotiomycetes</taxon>
        <taxon>Eurotiomycetidae</taxon>
        <taxon>Eurotiales</taxon>
        <taxon>Aspergillaceae</taxon>
        <taxon>Aspergillus</taxon>
        <taxon>Aspergillus subgen. Fumigati</taxon>
    </lineage>
</organism>
<feature type="chain" id="PRO_0000424133" description="Verruculogen synthase">
    <location>
        <begin position="1"/>
        <end position="291"/>
    </location>
</feature>
<feature type="active site" evidence="9 16">
    <location>
        <position position="68"/>
    </location>
</feature>
<feature type="mutagenesis site" description="Affects the catalytic activity." evidence="9">
    <original>Y</original>
    <variation>F</variation>
    <location>
        <position position="68"/>
    </location>
</feature>
<feature type="strand" evidence="19">
    <location>
        <begin position="11"/>
        <end position="13"/>
    </location>
</feature>
<feature type="helix" evidence="19">
    <location>
        <begin position="18"/>
        <end position="27"/>
    </location>
</feature>
<feature type="strand" evidence="19">
    <location>
        <begin position="29"/>
        <end position="35"/>
    </location>
</feature>
<feature type="helix" evidence="19">
    <location>
        <begin position="39"/>
        <end position="53"/>
    </location>
</feature>
<feature type="helix" evidence="19">
    <location>
        <begin position="65"/>
        <end position="67"/>
    </location>
</feature>
<feature type="strand" evidence="19">
    <location>
        <begin position="70"/>
        <end position="75"/>
    </location>
</feature>
<feature type="helix" evidence="19">
    <location>
        <begin position="78"/>
        <end position="81"/>
    </location>
</feature>
<feature type="helix" evidence="19">
    <location>
        <begin position="83"/>
        <end position="87"/>
    </location>
</feature>
<feature type="helix" evidence="19">
    <location>
        <begin position="89"/>
        <end position="91"/>
    </location>
</feature>
<feature type="helix" evidence="19">
    <location>
        <begin position="93"/>
        <end position="102"/>
    </location>
</feature>
<feature type="turn" evidence="19">
    <location>
        <begin position="103"/>
        <end position="106"/>
    </location>
</feature>
<feature type="strand" evidence="19">
    <location>
        <begin position="109"/>
        <end position="119"/>
    </location>
</feature>
<feature type="helix" evidence="19">
    <location>
        <begin position="131"/>
        <end position="134"/>
    </location>
</feature>
<feature type="helix" evidence="19">
    <location>
        <begin position="136"/>
        <end position="140"/>
    </location>
</feature>
<feature type="strand" evidence="19">
    <location>
        <begin position="149"/>
        <end position="157"/>
    </location>
</feature>
<feature type="turn" evidence="19">
    <location>
        <begin position="161"/>
        <end position="164"/>
    </location>
</feature>
<feature type="strand" evidence="18">
    <location>
        <begin position="166"/>
        <end position="168"/>
    </location>
</feature>
<feature type="helix" evidence="19">
    <location>
        <begin position="172"/>
        <end position="174"/>
    </location>
</feature>
<feature type="strand" evidence="18">
    <location>
        <begin position="175"/>
        <end position="177"/>
    </location>
</feature>
<feature type="helix" evidence="19">
    <location>
        <begin position="183"/>
        <end position="185"/>
    </location>
</feature>
<feature type="strand" evidence="18">
    <location>
        <begin position="187"/>
        <end position="189"/>
    </location>
</feature>
<feature type="strand" evidence="19">
    <location>
        <begin position="196"/>
        <end position="200"/>
    </location>
</feature>
<feature type="strand" evidence="19">
    <location>
        <begin position="213"/>
        <end position="215"/>
    </location>
</feature>
<feature type="strand" evidence="19">
    <location>
        <begin position="218"/>
        <end position="227"/>
    </location>
</feature>
<feature type="helix" evidence="19">
    <location>
        <begin position="241"/>
        <end position="245"/>
    </location>
</feature>
<feature type="helix" evidence="19">
    <location>
        <begin position="249"/>
        <end position="254"/>
    </location>
</feature>
<feature type="strand" evidence="19">
    <location>
        <begin position="270"/>
        <end position="273"/>
    </location>
</feature>
<feature type="helix" evidence="19">
    <location>
        <begin position="278"/>
        <end position="281"/>
    </location>
</feature>
<feature type="turn" evidence="17">
    <location>
        <begin position="287"/>
        <end position="291"/>
    </location>
</feature>